<reference key="1">
    <citation type="submission" date="2004-12" db="EMBL/GenBank/DDBJ databases">
        <authorList>
            <consortium name="NIH - Xenopus Gene Collection (XGC) project"/>
        </authorList>
    </citation>
    <scope>NUCLEOTIDE SEQUENCE [LARGE SCALE MRNA]</scope>
    <source>
        <tissue>Testis</tissue>
    </source>
</reference>
<protein>
    <recommendedName>
        <fullName evidence="3">Dynein axonemal assembly factor 10</fullName>
    </recommendedName>
    <alternativeName>
        <fullName>WD repeat-containing protein 92</fullName>
    </alternativeName>
</protein>
<keyword id="KW-0053">Apoptosis</keyword>
<keyword id="KW-0963">Cytoplasm</keyword>
<keyword id="KW-1185">Reference proteome</keyword>
<keyword id="KW-0677">Repeat</keyword>
<keyword id="KW-0853">WD repeat</keyword>
<name>DAA10_XENLA</name>
<feature type="chain" id="PRO_0000301674" description="Dynein axonemal assembly factor 10">
    <location>
        <begin position="1"/>
        <end position="358"/>
    </location>
</feature>
<feature type="repeat" description="WD 1">
    <location>
        <begin position="64"/>
        <end position="106"/>
    </location>
</feature>
<feature type="repeat" description="WD 2">
    <location>
        <begin position="116"/>
        <end position="155"/>
    </location>
</feature>
<feature type="repeat" description="WD 3">
    <location>
        <begin position="163"/>
        <end position="206"/>
    </location>
</feature>
<feature type="repeat" description="WD 4">
    <location>
        <begin position="208"/>
        <end position="250"/>
    </location>
</feature>
<feature type="repeat" description="WD 5">
    <location>
        <begin position="258"/>
        <end position="298"/>
    </location>
</feature>
<feature type="repeat" description="WD 6">
    <location>
        <begin position="320"/>
        <end position="358"/>
    </location>
</feature>
<comment type="function">
    <text evidence="1">Key assembly factor specifically required for the stability of axonemal dynein heavy chains in cytoplasm.</text>
</comment>
<comment type="subunit">
    <text evidence="1 2">Interacts with PIH1D1; the interaction associates DNAAF10 with the R2TP complex (By similarity). Interacts with several dynein axonemal assembly factors (By similarity).</text>
</comment>
<comment type="subcellular location">
    <subcellularLocation>
        <location evidence="1">Dynein axonemal particle</location>
    </subcellularLocation>
</comment>
<gene>
    <name type="primary">dnaaf10</name>
    <name type="synonym">wdr92</name>
</gene>
<organism>
    <name type="scientific">Xenopus laevis</name>
    <name type="common">African clawed frog</name>
    <dbReference type="NCBI Taxonomy" id="8355"/>
    <lineage>
        <taxon>Eukaryota</taxon>
        <taxon>Metazoa</taxon>
        <taxon>Chordata</taxon>
        <taxon>Craniata</taxon>
        <taxon>Vertebrata</taxon>
        <taxon>Euteleostomi</taxon>
        <taxon>Amphibia</taxon>
        <taxon>Batrachia</taxon>
        <taxon>Anura</taxon>
        <taxon>Pipoidea</taxon>
        <taxon>Pipidae</taxon>
        <taxon>Xenopodinae</taxon>
        <taxon>Xenopus</taxon>
        <taxon>Xenopus</taxon>
    </lineage>
</organism>
<evidence type="ECO:0000250" key="1">
    <source>
        <dbReference type="UniProtKB" id="A8J3F6"/>
    </source>
</evidence>
<evidence type="ECO:0000250" key="2">
    <source>
        <dbReference type="UniProtKB" id="Q96MX6"/>
    </source>
</evidence>
<evidence type="ECO:0000305" key="3"/>
<dbReference type="EMBL" id="BC088674">
    <property type="protein sequence ID" value="AAH88674.1"/>
    <property type="molecule type" value="mRNA"/>
</dbReference>
<dbReference type="RefSeq" id="NP_001088869.1">
    <property type="nucleotide sequence ID" value="NM_001095400.1"/>
</dbReference>
<dbReference type="SMR" id="Q5M7F6"/>
<dbReference type="BioGRID" id="106292">
    <property type="interactions" value="2"/>
</dbReference>
<dbReference type="IntAct" id="Q5M7F6">
    <property type="interactions" value="1"/>
</dbReference>
<dbReference type="DNASU" id="496212"/>
<dbReference type="GeneID" id="496212"/>
<dbReference type="KEGG" id="xla:496212"/>
<dbReference type="AGR" id="Xenbase:XB-GENE-980481"/>
<dbReference type="CTD" id="496212"/>
<dbReference type="Xenbase" id="XB-GENE-980481">
    <property type="gene designation" value="dnaaf10.L"/>
</dbReference>
<dbReference type="OMA" id="CLWKYNY"/>
<dbReference type="OrthoDB" id="10248252at2759"/>
<dbReference type="Proteomes" id="UP000186698">
    <property type="component" value="Chromosome 5L"/>
</dbReference>
<dbReference type="Bgee" id="496212">
    <property type="expression patterns" value="Expressed in testis and 19 other cell types or tissues"/>
</dbReference>
<dbReference type="GO" id="GO:0120293">
    <property type="term" value="C:dynein axonemal particle"/>
    <property type="evidence" value="ECO:0000250"/>
    <property type="project" value="UniProtKB"/>
</dbReference>
<dbReference type="GO" id="GO:0043130">
    <property type="term" value="F:ubiquitin binding"/>
    <property type="evidence" value="ECO:0000318"/>
    <property type="project" value="GO_Central"/>
</dbReference>
<dbReference type="GO" id="GO:0006915">
    <property type="term" value="P:apoptotic process"/>
    <property type="evidence" value="ECO:0007669"/>
    <property type="project" value="UniProtKB-KW"/>
</dbReference>
<dbReference type="GO" id="GO:0070286">
    <property type="term" value="P:axonemal dynein complex assembly"/>
    <property type="evidence" value="ECO:0000250"/>
    <property type="project" value="UniProtKB"/>
</dbReference>
<dbReference type="FunFam" id="2.130.10.10:FF:000258">
    <property type="entry name" value="WD repeat-containing protein 92"/>
    <property type="match status" value="1"/>
</dbReference>
<dbReference type="Gene3D" id="2.130.10.10">
    <property type="entry name" value="YVTN repeat-like/Quinoprotein amine dehydrogenase"/>
    <property type="match status" value="1"/>
</dbReference>
<dbReference type="InterPro" id="IPR015943">
    <property type="entry name" value="WD40/YVTN_repeat-like_dom_sf"/>
</dbReference>
<dbReference type="InterPro" id="IPR036322">
    <property type="entry name" value="WD40_repeat_dom_sf"/>
</dbReference>
<dbReference type="InterPro" id="IPR001680">
    <property type="entry name" value="WD40_rpt"/>
</dbReference>
<dbReference type="PANTHER" id="PTHR10971">
    <property type="entry name" value="MRNA EXPORT FACTOR AND BUB3"/>
    <property type="match status" value="1"/>
</dbReference>
<dbReference type="Pfam" id="PF00400">
    <property type="entry name" value="WD40"/>
    <property type="match status" value="2"/>
</dbReference>
<dbReference type="SMART" id="SM00320">
    <property type="entry name" value="WD40"/>
    <property type="match status" value="4"/>
</dbReference>
<dbReference type="SUPFAM" id="SSF50978">
    <property type="entry name" value="WD40 repeat-like"/>
    <property type="match status" value="1"/>
</dbReference>
<dbReference type="PROSITE" id="PS50082">
    <property type="entry name" value="WD_REPEATS_2"/>
    <property type="match status" value="1"/>
</dbReference>
<dbReference type="PROSITE" id="PS50294">
    <property type="entry name" value="WD_REPEATS_REGION"/>
    <property type="match status" value="1"/>
</dbReference>
<proteinExistence type="evidence at transcript level"/>
<sequence>MSSPLEKPQIIAHVQKSVNYTLFDCKWIPCSAKFVCVGNLARGSGVLQVYEIQQGEAKLLQETEKPKPIKCGTFGASSMQQRYLATGDFGGNLNIWNLEAPDTPVYSAKGHNEIINCIDGVGGVGIGDGAPEIVTGSRDGTVKVWDPRQKDTPVANMEPAAGEAKRDCWTVAFGNAYNEQERAVCAGYDNGDIKLFDLRNMSVRWETNIKNGVCSLEFDRKDIVMNKLVATSLEGKFHVFDMRTQHPTKGFASVSEKAHKSTVWQVRHLPQNRDVFMTSGGAGNLHLWKYEYPAQRSRKDSDGVDTGVAGSASLLQNVTLSTQPISSLDWSPDKKGLCVCTSFDQTVRVLIVTKLNRL</sequence>
<accession>Q5M7F6</accession>